<sequence>MGDNDRTAIRRKALRRGLVSEYVAAVFLMLKGYRILALRHRTRLGEIDIVARKGDLAVFVEVKARHGEAAAVDAVSAAAQKRIRAASDLWLARQADQARLSQRYDIVAVTPSRLPRHFPDAF</sequence>
<dbReference type="EMBL" id="CP001074">
    <property type="protein sequence ID" value="ACE89352.1"/>
    <property type="molecule type" value="Genomic_DNA"/>
</dbReference>
<dbReference type="SMR" id="B3PZ58"/>
<dbReference type="KEGG" id="rec:RHECIAT_CH0000358"/>
<dbReference type="eggNOG" id="COG0792">
    <property type="taxonomic scope" value="Bacteria"/>
</dbReference>
<dbReference type="HOGENOM" id="CLU_115353_0_2_5"/>
<dbReference type="Proteomes" id="UP000008817">
    <property type="component" value="Chromosome"/>
</dbReference>
<dbReference type="GO" id="GO:0003676">
    <property type="term" value="F:nucleic acid binding"/>
    <property type="evidence" value="ECO:0007669"/>
    <property type="project" value="InterPro"/>
</dbReference>
<dbReference type="Gene3D" id="3.40.1350.10">
    <property type="match status" value="1"/>
</dbReference>
<dbReference type="HAMAP" id="MF_00048">
    <property type="entry name" value="UPF0102"/>
    <property type="match status" value="1"/>
</dbReference>
<dbReference type="InterPro" id="IPR011335">
    <property type="entry name" value="Restrct_endonuc-II-like"/>
</dbReference>
<dbReference type="InterPro" id="IPR011856">
    <property type="entry name" value="tRNA_endonuc-like_dom_sf"/>
</dbReference>
<dbReference type="InterPro" id="IPR003509">
    <property type="entry name" value="UPF0102_YraN-like"/>
</dbReference>
<dbReference type="NCBIfam" id="NF009151">
    <property type="entry name" value="PRK12497.1-5"/>
    <property type="match status" value="1"/>
</dbReference>
<dbReference type="PANTHER" id="PTHR34039">
    <property type="entry name" value="UPF0102 PROTEIN YRAN"/>
    <property type="match status" value="1"/>
</dbReference>
<dbReference type="PANTHER" id="PTHR34039:SF1">
    <property type="entry name" value="UPF0102 PROTEIN YRAN"/>
    <property type="match status" value="1"/>
</dbReference>
<dbReference type="Pfam" id="PF02021">
    <property type="entry name" value="UPF0102"/>
    <property type="match status" value="1"/>
</dbReference>
<dbReference type="SUPFAM" id="SSF52980">
    <property type="entry name" value="Restriction endonuclease-like"/>
    <property type="match status" value="1"/>
</dbReference>
<evidence type="ECO:0000255" key="1">
    <source>
        <dbReference type="HAMAP-Rule" id="MF_00048"/>
    </source>
</evidence>
<gene>
    <name type="ordered locus">RHECIAT_CH0000358</name>
</gene>
<name>Y358_RHIE6</name>
<comment type="similarity">
    <text evidence="1">Belongs to the UPF0102 family.</text>
</comment>
<organism>
    <name type="scientific">Rhizobium etli (strain CIAT 652)</name>
    <dbReference type="NCBI Taxonomy" id="491916"/>
    <lineage>
        <taxon>Bacteria</taxon>
        <taxon>Pseudomonadati</taxon>
        <taxon>Pseudomonadota</taxon>
        <taxon>Alphaproteobacteria</taxon>
        <taxon>Hyphomicrobiales</taxon>
        <taxon>Rhizobiaceae</taxon>
        <taxon>Rhizobium/Agrobacterium group</taxon>
        <taxon>Rhizobium</taxon>
    </lineage>
</organism>
<reference key="1">
    <citation type="journal article" date="2010" name="Appl. Environ. Microbiol.">
        <title>Conserved symbiotic plasmid DNA sequences in the multireplicon pangenomic structure of Rhizobium etli.</title>
        <authorList>
            <person name="Gonzalez V."/>
            <person name="Acosta J.L."/>
            <person name="Santamaria R.I."/>
            <person name="Bustos P."/>
            <person name="Fernandez J.L."/>
            <person name="Hernandez Gonzalez I.L."/>
            <person name="Diaz R."/>
            <person name="Flores M."/>
            <person name="Palacios R."/>
            <person name="Mora J."/>
            <person name="Davila G."/>
        </authorList>
    </citation>
    <scope>NUCLEOTIDE SEQUENCE [LARGE SCALE GENOMIC DNA]</scope>
    <source>
        <strain>CIAT 652</strain>
    </source>
</reference>
<accession>B3PZ58</accession>
<proteinExistence type="inferred from homology"/>
<protein>
    <recommendedName>
        <fullName evidence="1">UPF0102 protein RHECIAT_CH0000358</fullName>
    </recommendedName>
</protein>
<feature type="chain" id="PRO_1000091255" description="UPF0102 protein RHECIAT_CH0000358">
    <location>
        <begin position="1"/>
        <end position="122"/>
    </location>
</feature>